<name>PUR7_PSEF5</name>
<gene>
    <name evidence="1" type="primary">purC</name>
    <name type="ordered locus">PFL_1460</name>
</gene>
<proteinExistence type="inferred from homology"/>
<protein>
    <recommendedName>
        <fullName evidence="1">Phosphoribosylaminoimidazole-succinocarboxamide synthase</fullName>
        <ecNumber evidence="1">6.3.2.6</ecNumber>
    </recommendedName>
    <alternativeName>
        <fullName evidence="1">SAICAR synthetase</fullName>
    </alternativeName>
</protein>
<accession>Q4KGP5</accession>
<keyword id="KW-0067">ATP-binding</keyword>
<keyword id="KW-0436">Ligase</keyword>
<keyword id="KW-0547">Nucleotide-binding</keyword>
<keyword id="KW-0658">Purine biosynthesis</keyword>
<dbReference type="EC" id="6.3.2.6" evidence="1"/>
<dbReference type="EMBL" id="CP000076">
    <property type="protein sequence ID" value="AAY90744.1"/>
    <property type="molecule type" value="Genomic_DNA"/>
</dbReference>
<dbReference type="RefSeq" id="WP_011059799.1">
    <property type="nucleotide sequence ID" value="NC_004129.6"/>
</dbReference>
<dbReference type="SMR" id="Q4KGP5"/>
<dbReference type="STRING" id="220664.PFL_1460"/>
<dbReference type="GeneID" id="57474479"/>
<dbReference type="KEGG" id="pfl:PFL_1460"/>
<dbReference type="PATRIC" id="fig|220664.5.peg.1494"/>
<dbReference type="eggNOG" id="COG0152">
    <property type="taxonomic scope" value="Bacteria"/>
</dbReference>
<dbReference type="HOGENOM" id="CLU_061495_2_0_6"/>
<dbReference type="UniPathway" id="UPA00074">
    <property type="reaction ID" value="UER00131"/>
</dbReference>
<dbReference type="Proteomes" id="UP000008540">
    <property type="component" value="Chromosome"/>
</dbReference>
<dbReference type="GO" id="GO:0005829">
    <property type="term" value="C:cytosol"/>
    <property type="evidence" value="ECO:0007669"/>
    <property type="project" value="TreeGrafter"/>
</dbReference>
<dbReference type="GO" id="GO:0005524">
    <property type="term" value="F:ATP binding"/>
    <property type="evidence" value="ECO:0007669"/>
    <property type="project" value="UniProtKB-KW"/>
</dbReference>
<dbReference type="GO" id="GO:0004639">
    <property type="term" value="F:phosphoribosylaminoimidazolesuccinocarboxamide synthase activity"/>
    <property type="evidence" value="ECO:0007669"/>
    <property type="project" value="UniProtKB-UniRule"/>
</dbReference>
<dbReference type="GO" id="GO:0006189">
    <property type="term" value="P:'de novo' IMP biosynthetic process"/>
    <property type="evidence" value="ECO:0007669"/>
    <property type="project" value="UniProtKB-UniRule"/>
</dbReference>
<dbReference type="GO" id="GO:0009236">
    <property type="term" value="P:cobalamin biosynthetic process"/>
    <property type="evidence" value="ECO:0007669"/>
    <property type="project" value="InterPro"/>
</dbReference>
<dbReference type="CDD" id="cd01415">
    <property type="entry name" value="SAICAR_synt_PurC"/>
    <property type="match status" value="1"/>
</dbReference>
<dbReference type="FunFam" id="3.30.200.20:FF:000086">
    <property type="entry name" value="Phosphoribosylaminoimidazole-succinocarboxamide synthase"/>
    <property type="match status" value="1"/>
</dbReference>
<dbReference type="FunFam" id="3.30.470.20:FF:000006">
    <property type="entry name" value="Phosphoribosylaminoimidazole-succinocarboxamide synthase"/>
    <property type="match status" value="1"/>
</dbReference>
<dbReference type="Gene3D" id="3.30.470.20">
    <property type="entry name" value="ATP-grasp fold, B domain"/>
    <property type="match status" value="1"/>
</dbReference>
<dbReference type="Gene3D" id="3.30.200.20">
    <property type="entry name" value="Phosphorylase Kinase, domain 1"/>
    <property type="match status" value="1"/>
</dbReference>
<dbReference type="HAMAP" id="MF_00137">
    <property type="entry name" value="SAICAR_synth"/>
    <property type="match status" value="1"/>
</dbReference>
<dbReference type="InterPro" id="IPR028923">
    <property type="entry name" value="SAICAR_synt/ADE2_N"/>
</dbReference>
<dbReference type="InterPro" id="IPR033934">
    <property type="entry name" value="SAICAR_synt_PurC"/>
</dbReference>
<dbReference type="InterPro" id="IPR001636">
    <property type="entry name" value="SAICAR_synth"/>
</dbReference>
<dbReference type="InterPro" id="IPR050089">
    <property type="entry name" value="SAICAR_synthetase"/>
</dbReference>
<dbReference type="InterPro" id="IPR018236">
    <property type="entry name" value="SAICAR_synthetase_CS"/>
</dbReference>
<dbReference type="NCBIfam" id="TIGR00081">
    <property type="entry name" value="purC"/>
    <property type="match status" value="1"/>
</dbReference>
<dbReference type="PANTHER" id="PTHR43599">
    <property type="entry name" value="MULTIFUNCTIONAL PROTEIN ADE2"/>
    <property type="match status" value="1"/>
</dbReference>
<dbReference type="PANTHER" id="PTHR43599:SF3">
    <property type="entry name" value="SI:DKEY-6E2.2"/>
    <property type="match status" value="1"/>
</dbReference>
<dbReference type="Pfam" id="PF01259">
    <property type="entry name" value="SAICAR_synt"/>
    <property type="match status" value="1"/>
</dbReference>
<dbReference type="SUPFAM" id="SSF56104">
    <property type="entry name" value="SAICAR synthase-like"/>
    <property type="match status" value="1"/>
</dbReference>
<dbReference type="PROSITE" id="PS01057">
    <property type="entry name" value="SAICAR_SYNTHETASE_1"/>
    <property type="match status" value="1"/>
</dbReference>
<dbReference type="PROSITE" id="PS01058">
    <property type="entry name" value="SAICAR_SYNTHETASE_2"/>
    <property type="match status" value="1"/>
</dbReference>
<evidence type="ECO:0000255" key="1">
    <source>
        <dbReference type="HAMAP-Rule" id="MF_00137"/>
    </source>
</evidence>
<feature type="chain" id="PRO_1000018758" description="Phosphoribosylaminoimidazole-succinocarboxamide synthase">
    <location>
        <begin position="1"/>
        <end position="237"/>
    </location>
</feature>
<reference key="1">
    <citation type="journal article" date="2005" name="Nat. Biotechnol.">
        <title>Complete genome sequence of the plant commensal Pseudomonas fluorescens Pf-5.</title>
        <authorList>
            <person name="Paulsen I.T."/>
            <person name="Press C.M."/>
            <person name="Ravel J."/>
            <person name="Kobayashi D.Y."/>
            <person name="Myers G.S.A."/>
            <person name="Mavrodi D.V."/>
            <person name="DeBoy R.T."/>
            <person name="Seshadri R."/>
            <person name="Ren Q."/>
            <person name="Madupu R."/>
            <person name="Dodson R.J."/>
            <person name="Durkin A.S."/>
            <person name="Brinkac L.M."/>
            <person name="Daugherty S.C."/>
            <person name="Sullivan S.A."/>
            <person name="Rosovitz M.J."/>
            <person name="Gwinn M.L."/>
            <person name="Zhou L."/>
            <person name="Schneider D.J."/>
            <person name="Cartinhour S.W."/>
            <person name="Nelson W.C."/>
            <person name="Weidman J."/>
            <person name="Watkins K."/>
            <person name="Tran K."/>
            <person name="Khouri H."/>
            <person name="Pierson E.A."/>
            <person name="Pierson L.S. III"/>
            <person name="Thomashow L.S."/>
            <person name="Loper J.E."/>
        </authorList>
    </citation>
    <scope>NUCLEOTIDE SEQUENCE [LARGE SCALE GENOMIC DNA]</scope>
    <source>
        <strain>ATCC BAA-477 / NRRL B-23932 / Pf-5</strain>
    </source>
</reference>
<organism>
    <name type="scientific">Pseudomonas fluorescens (strain ATCC BAA-477 / NRRL B-23932 / Pf-5)</name>
    <dbReference type="NCBI Taxonomy" id="220664"/>
    <lineage>
        <taxon>Bacteria</taxon>
        <taxon>Pseudomonadati</taxon>
        <taxon>Pseudomonadota</taxon>
        <taxon>Gammaproteobacteria</taxon>
        <taxon>Pseudomonadales</taxon>
        <taxon>Pseudomonadaceae</taxon>
        <taxon>Pseudomonas</taxon>
    </lineage>
</organism>
<comment type="catalytic activity">
    <reaction evidence="1">
        <text>5-amino-1-(5-phospho-D-ribosyl)imidazole-4-carboxylate + L-aspartate + ATP = (2S)-2-[5-amino-1-(5-phospho-beta-D-ribosyl)imidazole-4-carboxamido]succinate + ADP + phosphate + 2 H(+)</text>
        <dbReference type="Rhea" id="RHEA:22628"/>
        <dbReference type="ChEBI" id="CHEBI:15378"/>
        <dbReference type="ChEBI" id="CHEBI:29991"/>
        <dbReference type="ChEBI" id="CHEBI:30616"/>
        <dbReference type="ChEBI" id="CHEBI:43474"/>
        <dbReference type="ChEBI" id="CHEBI:58443"/>
        <dbReference type="ChEBI" id="CHEBI:77657"/>
        <dbReference type="ChEBI" id="CHEBI:456216"/>
        <dbReference type="EC" id="6.3.2.6"/>
    </reaction>
</comment>
<comment type="pathway">
    <text evidence="1">Purine metabolism; IMP biosynthesis via de novo pathway; 5-amino-1-(5-phospho-D-ribosyl)imidazole-4-carboxamide from 5-amino-1-(5-phospho-D-ribosyl)imidazole-4-carboxylate: step 1/2.</text>
</comment>
<comment type="similarity">
    <text evidence="1">Belongs to the SAICAR synthetase family.</text>
</comment>
<sequence length="237" mass="26862">MEKREELYRGKAKSVYKTDDADRLILLFRNDTSAFDGKRIEQLDRKGMVNNKFNAFIMQKLEAAGVPTQFDKLLGDNECLVKKLDMIPVECVVRNYAAGSLVKRLGVEEGMKLNPYTFELFLKDDAKGDPFINESHVVAFGWGTAEQLARMKELSLKVNEVLSKLFDDAGLLLVDFKLEFGVFSDGSIVLGDEFSPDGCRLWDKDTKKKMDKDRFRQGLGDVIEAYEEVAQRLGVPL</sequence>